<gene>
    <name evidence="1" type="primary">UBXN6</name>
    <name evidence="1" type="synonym">UBXD1</name>
</gene>
<name>UBXN6_BOVIN</name>
<feature type="chain" id="PRO_0000240351" description="UBX domain-containing protein 6">
    <location>
        <begin position="1"/>
        <end position="441"/>
    </location>
</feature>
<feature type="domain" description="PUB" evidence="2">
    <location>
        <begin position="175"/>
        <end position="244"/>
    </location>
</feature>
<feature type="domain" description="UBX" evidence="3">
    <location>
        <begin position="332"/>
        <end position="408"/>
    </location>
</feature>
<feature type="region of interest" description="Mediates interaction with LMAN1" evidence="1">
    <location>
        <begin position="1"/>
        <end position="10"/>
    </location>
</feature>
<feature type="region of interest" description="Disordered" evidence="4">
    <location>
        <begin position="12"/>
        <end position="57"/>
    </location>
</feature>
<feature type="region of interest" description="VCP/p97-interacting motif (VIM)" evidence="1">
    <location>
        <begin position="51"/>
        <end position="63"/>
    </location>
</feature>
<feature type="region of interest" description="Disordered" evidence="4">
    <location>
        <begin position="62"/>
        <end position="81"/>
    </location>
</feature>
<feature type="region of interest" description="Disordered" evidence="4">
    <location>
        <begin position="86"/>
        <end position="113"/>
    </location>
</feature>
<feature type="compositionally biased region" description="Basic and acidic residues" evidence="4">
    <location>
        <begin position="27"/>
        <end position="36"/>
    </location>
</feature>
<dbReference type="EMBL" id="BC112614">
    <property type="protein sequence ID" value="AAI12615.1"/>
    <property type="molecule type" value="mRNA"/>
</dbReference>
<dbReference type="RefSeq" id="NP_001039451.1">
    <property type="nucleotide sequence ID" value="NM_001045986.1"/>
</dbReference>
<dbReference type="SMR" id="Q2KIJ6"/>
<dbReference type="FunCoup" id="Q2KIJ6">
    <property type="interactions" value="2505"/>
</dbReference>
<dbReference type="STRING" id="9913.ENSBTAP00000010767"/>
<dbReference type="PaxDb" id="9913-ENSBTAP00000010767"/>
<dbReference type="GeneID" id="507936"/>
<dbReference type="KEGG" id="bta:507936"/>
<dbReference type="CTD" id="80700"/>
<dbReference type="eggNOG" id="KOG2699">
    <property type="taxonomic scope" value="Eukaryota"/>
</dbReference>
<dbReference type="InParanoid" id="Q2KIJ6"/>
<dbReference type="OrthoDB" id="49605at2759"/>
<dbReference type="Proteomes" id="UP000009136">
    <property type="component" value="Unplaced"/>
</dbReference>
<dbReference type="GO" id="GO:0005813">
    <property type="term" value="C:centrosome"/>
    <property type="evidence" value="ECO:0007669"/>
    <property type="project" value="UniProtKB-SubCell"/>
</dbReference>
<dbReference type="GO" id="GO:0005737">
    <property type="term" value="C:cytoplasm"/>
    <property type="evidence" value="ECO:0000250"/>
    <property type="project" value="UniProtKB"/>
</dbReference>
<dbReference type="GO" id="GO:0005829">
    <property type="term" value="C:cytosol"/>
    <property type="evidence" value="ECO:0000250"/>
    <property type="project" value="UniProtKB"/>
</dbReference>
<dbReference type="GO" id="GO:0031901">
    <property type="term" value="C:early endosome membrane"/>
    <property type="evidence" value="ECO:0000250"/>
    <property type="project" value="UniProtKB"/>
</dbReference>
<dbReference type="GO" id="GO:0031902">
    <property type="term" value="C:late endosome membrane"/>
    <property type="evidence" value="ECO:0000250"/>
    <property type="project" value="UniProtKB"/>
</dbReference>
<dbReference type="GO" id="GO:0005765">
    <property type="term" value="C:lysosomal membrane"/>
    <property type="evidence" value="ECO:0000250"/>
    <property type="project" value="UniProtKB"/>
</dbReference>
<dbReference type="GO" id="GO:0016020">
    <property type="term" value="C:membrane"/>
    <property type="evidence" value="ECO:0000250"/>
    <property type="project" value="UniProtKB"/>
</dbReference>
<dbReference type="GO" id="GO:0005634">
    <property type="term" value="C:nucleus"/>
    <property type="evidence" value="ECO:0007669"/>
    <property type="project" value="UniProtKB-SubCell"/>
</dbReference>
<dbReference type="GO" id="GO:0032510">
    <property type="term" value="P:endosome to lysosome transport via multivesicular body sorting pathway"/>
    <property type="evidence" value="ECO:0000250"/>
    <property type="project" value="UniProtKB"/>
</dbReference>
<dbReference type="GO" id="GO:0036503">
    <property type="term" value="P:ERAD pathway"/>
    <property type="evidence" value="ECO:0000250"/>
    <property type="project" value="UniProtKB"/>
</dbReference>
<dbReference type="GO" id="GO:0016236">
    <property type="term" value="P:macroautophagy"/>
    <property type="evidence" value="ECO:0000250"/>
    <property type="project" value="UniProtKB"/>
</dbReference>
<dbReference type="CDD" id="cd10460">
    <property type="entry name" value="PUB_UBXD1"/>
    <property type="match status" value="1"/>
</dbReference>
<dbReference type="CDD" id="cd16119">
    <property type="entry name" value="UBX_UBXN6"/>
    <property type="match status" value="1"/>
</dbReference>
<dbReference type="FunFam" id="3.10.20.90:FF:000185">
    <property type="entry name" value="UBX domain-containing protein 6"/>
    <property type="match status" value="1"/>
</dbReference>
<dbReference type="FunFam" id="1.20.58.2190:FF:000003">
    <property type="entry name" value="UBX domain-containing protein 6 isoform 1"/>
    <property type="match status" value="1"/>
</dbReference>
<dbReference type="Gene3D" id="1.20.58.2190">
    <property type="match status" value="1"/>
</dbReference>
<dbReference type="Gene3D" id="3.10.20.90">
    <property type="entry name" value="Phosphatidylinositol 3-kinase Catalytic Subunit, Chain A, domain 1"/>
    <property type="match status" value="1"/>
</dbReference>
<dbReference type="InterPro" id="IPR036339">
    <property type="entry name" value="PUB-like_dom_sf"/>
</dbReference>
<dbReference type="InterPro" id="IPR018997">
    <property type="entry name" value="PUB_domain"/>
</dbReference>
<dbReference type="InterPro" id="IPR029071">
    <property type="entry name" value="Ubiquitin-like_domsf"/>
</dbReference>
<dbReference type="InterPro" id="IPR001012">
    <property type="entry name" value="UBX_dom"/>
</dbReference>
<dbReference type="InterPro" id="IPR042774">
    <property type="entry name" value="UBXN6_PUB"/>
</dbReference>
<dbReference type="PANTHER" id="PTHR23153:SF38">
    <property type="entry name" value="UBX DOMAIN-CONTAINING PROTEIN 6"/>
    <property type="match status" value="1"/>
</dbReference>
<dbReference type="PANTHER" id="PTHR23153">
    <property type="entry name" value="UBX-RELATED"/>
    <property type="match status" value="1"/>
</dbReference>
<dbReference type="Pfam" id="PF09409">
    <property type="entry name" value="PUB"/>
    <property type="match status" value="1"/>
</dbReference>
<dbReference type="Pfam" id="PF00789">
    <property type="entry name" value="UBX"/>
    <property type="match status" value="1"/>
</dbReference>
<dbReference type="SMART" id="SM00580">
    <property type="entry name" value="PUG"/>
    <property type="match status" value="1"/>
</dbReference>
<dbReference type="SMART" id="SM00166">
    <property type="entry name" value="UBX"/>
    <property type="match status" value="1"/>
</dbReference>
<dbReference type="SUPFAM" id="SSF143503">
    <property type="entry name" value="PUG domain-like"/>
    <property type="match status" value="1"/>
</dbReference>
<dbReference type="SUPFAM" id="SSF54236">
    <property type="entry name" value="Ubiquitin-like"/>
    <property type="match status" value="1"/>
</dbReference>
<dbReference type="PROSITE" id="PS50033">
    <property type="entry name" value="UBX"/>
    <property type="match status" value="1"/>
</dbReference>
<keyword id="KW-0963">Cytoplasm</keyword>
<keyword id="KW-0206">Cytoskeleton</keyword>
<keyword id="KW-0967">Endosome</keyword>
<keyword id="KW-0458">Lysosome</keyword>
<keyword id="KW-0472">Membrane</keyword>
<keyword id="KW-0539">Nucleus</keyword>
<keyword id="KW-1185">Reference proteome</keyword>
<keyword id="KW-0833">Ubl conjugation pathway</keyword>
<evidence type="ECO:0000250" key="1">
    <source>
        <dbReference type="UniProtKB" id="Q9BZV1"/>
    </source>
</evidence>
<evidence type="ECO:0000255" key="2"/>
<evidence type="ECO:0000255" key="3">
    <source>
        <dbReference type="PROSITE-ProRule" id="PRU00215"/>
    </source>
</evidence>
<evidence type="ECO:0000256" key="4">
    <source>
        <dbReference type="SAM" id="MobiDB-lite"/>
    </source>
</evidence>
<evidence type="ECO:0000305" key="5"/>
<comment type="function">
    <text evidence="1">May negatively regulate the ATPase activity of VCP, an ATP-driven segregase that associates with different cofactors to control a wide variety of cellular processes. As a cofactor of VCP, it may play a role in the transport of CAV1 to lysosomes for degradation. It may also play a role in endoplasmic reticulum-associated degradation (ERAD) of misfolded proteins. Together with VCP and other cofactors, it may play a role in macroautophagy, regulating for instance the clearance of damaged lysosomes.</text>
</comment>
<comment type="subunit">
    <text evidence="1">Interacts with VCP through the PUB domain (via C-terminus) and VIM motif (via N-terminus); the interaction is direct. Forms a ternary complex with CAV1 and VCP. Interacts with SYVN1. Interacts with HERPUD1. Interacts with VCPKMT. May interact with DERL1. Interacts with PLAA, VCP and YOD1; may form a complex involved in macroautophagy. Interacts with LMAN1.</text>
</comment>
<comment type="subcellular location">
    <subcellularLocation>
        <location evidence="1">Cytoplasm</location>
    </subcellularLocation>
    <subcellularLocation>
        <location evidence="1">Cytoplasm</location>
        <location evidence="1">Cytosol</location>
    </subcellularLocation>
    <subcellularLocation>
        <location evidence="1">Membrane</location>
        <topology evidence="1">Peripheral membrane protein</topology>
    </subcellularLocation>
    <subcellularLocation>
        <location evidence="1">Nucleus</location>
    </subcellularLocation>
    <subcellularLocation>
        <location evidence="1">Cytoplasm</location>
        <location evidence="1">Cytoskeleton</location>
        <location evidence="1">Microtubule organizing center</location>
        <location evidence="1">Centrosome</location>
    </subcellularLocation>
    <subcellularLocation>
        <location evidence="1">Early endosome membrane</location>
        <topology evidence="1">Peripheral membrane protein</topology>
    </subcellularLocation>
    <subcellularLocation>
        <location evidence="1">Late endosome membrane</location>
        <topology evidence="1">Peripheral membrane protein</topology>
    </subcellularLocation>
    <subcellularLocation>
        <location evidence="1">Lysosome membrane</location>
        <topology evidence="1">Peripheral membrane protein</topology>
    </subcellularLocation>
    <text evidence="1">Localizes at the centrosome both in interphase and during mitosis. May be recruited to endosomal and lysosomal membranes as part of a ternary complex with CAV1 and VCP. Recruited to damaged lysosomes decorated with K48-linked ubiquitin chains.</text>
</comment>
<comment type="domain">
    <text evidence="1">The UBX domain lacks key residues critical for VCP binding.</text>
</comment>
<accession>Q2KIJ6</accession>
<organism>
    <name type="scientific">Bos taurus</name>
    <name type="common">Bovine</name>
    <dbReference type="NCBI Taxonomy" id="9913"/>
    <lineage>
        <taxon>Eukaryota</taxon>
        <taxon>Metazoa</taxon>
        <taxon>Chordata</taxon>
        <taxon>Craniata</taxon>
        <taxon>Vertebrata</taxon>
        <taxon>Euteleostomi</taxon>
        <taxon>Mammalia</taxon>
        <taxon>Eutheria</taxon>
        <taxon>Laurasiatheria</taxon>
        <taxon>Artiodactyla</taxon>
        <taxon>Ruminantia</taxon>
        <taxon>Pecora</taxon>
        <taxon>Bovidae</taxon>
        <taxon>Bovinae</taxon>
        <taxon>Bos</taxon>
    </lineage>
</organism>
<sequence length="441" mass="49733">MKKFFQEIKADIKFKSAGPGQKLTESVGEKAPKEKPSQPPVRQPRQGPTNEAQMAAAAALARLEQKQPRARGPTSQDSIRNQVRKELRAEAAVSGDPEAPGSNTAPEPKEEGSAHLAVPGVYFTCPLTGAILRKDQRDARIREAILMHFSTDPVAASIMKIHTFNKDRDRVKLGVDTIAKYLDNIHLHPEEEKYRKIKVQNKVFQERIHCLEGTHEFFEAIGFQKVLLPIPDQEGPEEFYVLSEAALAQPQSLEWHKEQLLSAEPVRATLARQRRVFRPSTLASQFDLPADFFNLTAEEIKREQRLRSEAVERLSVLRTKAMREREEQREMRKYTYTLLRVRLPDGCLLQGTFYARERVAALYGFVREALQNDWLPFELLASGGQKLSEDENLAFNECGLVPSALLTFSLDAAVLEDIRAAGTQPDTSILKPELLSAIEKL</sequence>
<protein>
    <recommendedName>
        <fullName evidence="5">UBX domain-containing protein 6</fullName>
    </recommendedName>
    <alternativeName>
        <fullName evidence="1">UBX domain-containing protein 1</fullName>
    </alternativeName>
</protein>
<reference key="1">
    <citation type="submission" date="2006-01" db="EMBL/GenBank/DDBJ databases">
        <authorList>
            <consortium name="NIH - Mammalian Gene Collection (MGC) project"/>
        </authorList>
    </citation>
    <scope>NUCLEOTIDE SEQUENCE [LARGE SCALE MRNA]</scope>
    <source>
        <strain>Hereford</strain>
        <tissue>Testis</tissue>
    </source>
</reference>
<proteinExistence type="evidence at transcript level"/>